<organism>
    <name type="scientific">Lycosa singoriensis</name>
    <name type="common">Wolf spider</name>
    <name type="synonym">Aranea singoriensis</name>
    <dbReference type="NCBI Taxonomy" id="434756"/>
    <lineage>
        <taxon>Eukaryota</taxon>
        <taxon>Metazoa</taxon>
        <taxon>Ecdysozoa</taxon>
        <taxon>Arthropoda</taxon>
        <taxon>Chelicerata</taxon>
        <taxon>Arachnida</taxon>
        <taxon>Araneae</taxon>
        <taxon>Araneomorphae</taxon>
        <taxon>Entelegynae</taxon>
        <taxon>Lycosoidea</taxon>
        <taxon>Lycosidae</taxon>
        <taxon>Lycosa</taxon>
    </lineage>
</organism>
<accession>B6DCQ7</accession>
<feature type="signal peptide" evidence="2">
    <location>
        <begin position="1"/>
        <end position="20"/>
    </location>
</feature>
<feature type="propeptide" id="PRO_0000401629" evidence="1">
    <location>
        <begin position="21"/>
        <end position="44"/>
    </location>
</feature>
<feature type="chain" id="PRO_0000401630" description="U3-lycotoxin-Ls1b">
    <location>
        <begin position="45"/>
        <end position="115"/>
    </location>
</feature>
<feature type="disulfide bond" evidence="1">
    <location>
        <begin position="48"/>
        <end position="63"/>
    </location>
</feature>
<feature type="disulfide bond" evidence="1">
    <location>
        <begin position="55"/>
        <end position="72"/>
    </location>
</feature>
<feature type="disulfide bond" evidence="1">
    <location>
        <begin position="62"/>
        <end position="87"/>
    </location>
</feature>
<feature type="disulfide bond" evidence="1">
    <location>
        <begin position="74"/>
        <end position="85"/>
    </location>
</feature>
<reference key="1">
    <citation type="journal article" date="2010" name="Zoology">
        <title>Transcriptome analysis of the venom glands of the Chinese wolf spider Lycosa singoriensis.</title>
        <authorList>
            <person name="Zhang Y."/>
            <person name="Chen J."/>
            <person name="Tang X."/>
            <person name="Wang F."/>
            <person name="Jiang L."/>
            <person name="Xiong X."/>
            <person name="Wang M."/>
            <person name="Rong M."/>
            <person name="Liu Z."/>
            <person name="Liang S."/>
        </authorList>
    </citation>
    <scope>NUCLEOTIDE SEQUENCE [LARGE SCALE MRNA]</scope>
    <source>
        <tissue>Venom gland</tissue>
    </source>
</reference>
<proteinExistence type="evidence at transcript level"/>
<keyword id="KW-1015">Disulfide bond</keyword>
<keyword id="KW-0960">Knottin</keyword>
<keyword id="KW-0964">Secreted</keyword>
<keyword id="KW-0732">Signal</keyword>
<keyword id="KW-0800">Toxin</keyword>
<name>TX312_LYCSI</name>
<sequence length="115" mass="13303">MKFVLLFGVLLVTLFSYSSAEMLDDFDQADEDELLSLIEKEEARAKECTPRFYDCSRDRHSCCRSELFKDVCTCFYPEGGDNEVCTCQQPKHLKYMEKAADKAKKFGGKIKKWFG</sequence>
<evidence type="ECO:0000250" key="1"/>
<evidence type="ECO:0000255" key="2"/>
<evidence type="ECO:0000305" key="3"/>
<comment type="subcellular location">
    <subcellularLocation>
        <location evidence="1">Secreted</location>
    </subcellularLocation>
</comment>
<comment type="tissue specificity">
    <text>Expressed by the venom gland.</text>
</comment>
<comment type="domain">
    <text evidence="1">The presence of a 'disulfide through disulfide knot' structurally defines this protein as a knottin.</text>
</comment>
<comment type="similarity">
    <text evidence="3">Belongs to the neurotoxin 19 (CSTX) family. 01 subfamily.</text>
</comment>
<protein>
    <recommendedName>
        <fullName>U3-lycotoxin-Ls1b</fullName>
    </recommendedName>
    <alternativeName>
        <fullName>Toxin-like structure LSTX-B12</fullName>
    </alternativeName>
</protein>
<dbReference type="EMBL" id="EU925991">
    <property type="protein sequence ID" value="ACI41323.1"/>
    <property type="molecule type" value="mRNA"/>
</dbReference>
<dbReference type="EMBL" id="FM863995">
    <property type="protein sequence ID" value="CAS03593.1"/>
    <property type="molecule type" value="mRNA"/>
</dbReference>
<dbReference type="SMR" id="B6DCQ7"/>
<dbReference type="ArachnoServer" id="AS000940">
    <property type="toxin name" value="U3-lycotoxin-Ls1b"/>
</dbReference>
<dbReference type="GO" id="GO:0005576">
    <property type="term" value="C:extracellular region"/>
    <property type="evidence" value="ECO:0007669"/>
    <property type="project" value="UniProtKB-SubCell"/>
</dbReference>
<dbReference type="GO" id="GO:0090729">
    <property type="term" value="F:toxin activity"/>
    <property type="evidence" value="ECO:0007669"/>
    <property type="project" value="UniProtKB-KW"/>
</dbReference>
<dbReference type="InterPro" id="IPR019553">
    <property type="entry name" value="Spider_toxin_CSTX_knottin"/>
</dbReference>
<dbReference type="InterPro" id="IPR011142">
    <property type="entry name" value="Spider_toxin_CSTX_Knottin_CS"/>
</dbReference>
<dbReference type="Pfam" id="PF10530">
    <property type="entry name" value="Toxin_35"/>
    <property type="match status" value="1"/>
</dbReference>
<dbReference type="PROSITE" id="PS60029">
    <property type="entry name" value="SPIDER_CSTX"/>
    <property type="match status" value="1"/>
</dbReference>